<sequence>MDQARISFFPDGLRVMIIDDDAKAVRRATATLSQLQYAVVATHSTASAGLRALSGDNVVEIQAILCDVHKVVSSGFDFRRVVESELRIPVIYLLSKMEEEDMVAGEDAEFLNHLLLTATYIVRKPLNPTVMARLWRVVAWRMYCLEERIQANVAANAGAGGEDDDDDDDVVIVEEPQVHFKVVRRTSGGSRKRQLTINVVDDGNRGSGSGGGGGGGADANPTRILQHITSNLQEFRTKHQKKDMAIERPLISSDSMFLKAILPTLKISPCNPLILTGGIGSSSVAAEAFAGGSSSAAPLQIPVFQQQSTGNGNTVISFSNNASPMAMRAPTDNTMISFNNVSAAPVANAVISFSNISRSAAMQAPAARGQHLSGDVQQLDFPQQKLYFGPFSYQGPPPPSMHNHINLLPPTSSPVTCSMDKGKVPIIELPYGMPVDDFLVGQTAYGGAGLSIGATDAAATAYPYTDAPSNNVATGCLMVPRMGPAFSITEPTVVAQGEGIGTGVDAGTSEKNAIVEAPNNPAPLMVLDQVAADAAMDVEEDIMFSLESLLGPDYDLLPMEDVSAPDTAAAGDAAGGSLDGEEGGMDIGWDLDLDDILVENVNDFAFLDNLAGSE</sequence>
<organism>
    <name type="scientific">Oryza sativa subsp. indica</name>
    <name type="common">Rice</name>
    <dbReference type="NCBI Taxonomy" id="39946"/>
    <lineage>
        <taxon>Eukaryota</taxon>
        <taxon>Viridiplantae</taxon>
        <taxon>Streptophyta</taxon>
        <taxon>Embryophyta</taxon>
        <taxon>Tracheophyta</taxon>
        <taxon>Spermatophyta</taxon>
        <taxon>Magnoliopsida</taxon>
        <taxon>Liliopsida</taxon>
        <taxon>Poales</taxon>
        <taxon>Poaceae</taxon>
        <taxon>BOP clade</taxon>
        <taxon>Oryzoideae</taxon>
        <taxon>Oryzeae</taxon>
        <taxon>Oryzinae</taxon>
        <taxon>Oryza</taxon>
        <taxon>Oryza sativa</taxon>
    </lineage>
</organism>
<keyword id="KW-0010">Activator</keyword>
<keyword id="KW-0932">Cytokinin signaling pathway</keyword>
<keyword id="KW-0597">Phosphoprotein</keyword>
<keyword id="KW-1185">Reference proteome</keyword>
<keyword id="KW-0902">Two-component regulatory system</keyword>
<name>ORR33_ORYSI</name>
<gene>
    <name evidence="4" type="primary">RR33</name>
    <name evidence="5" type="ORF">OsI_29475</name>
</gene>
<feature type="chain" id="PRO_0000433858" description="Two-component response regulator ORR33">
    <location>
        <begin position="1"/>
        <end position="614"/>
    </location>
</feature>
<feature type="domain" description="Response regulatory" evidence="2">
    <location>
        <begin position="14"/>
        <end position="139"/>
    </location>
</feature>
<feature type="region of interest" description="Disordered" evidence="3">
    <location>
        <begin position="193"/>
        <end position="220"/>
    </location>
</feature>
<feature type="compositionally biased region" description="Gly residues" evidence="3">
    <location>
        <begin position="205"/>
        <end position="217"/>
    </location>
</feature>
<feature type="modified residue" description="4-aspartylphosphate" evidence="2">
    <location>
        <position position="67"/>
    </location>
</feature>
<dbReference type="EMBL" id="CM000133">
    <property type="protein sequence ID" value="EAZ07232.1"/>
    <property type="molecule type" value="Genomic_DNA"/>
</dbReference>
<dbReference type="SMR" id="A2YVX1"/>
<dbReference type="STRING" id="39946.A2YVX1"/>
<dbReference type="EnsemblPlants" id="BGIOSGA026877-TA">
    <property type="protein sequence ID" value="BGIOSGA026877-PA"/>
    <property type="gene ID" value="BGIOSGA026877"/>
</dbReference>
<dbReference type="Gramene" id="BGIOSGA026877-TA">
    <property type="protein sequence ID" value="BGIOSGA026877-PA"/>
    <property type="gene ID" value="BGIOSGA026877"/>
</dbReference>
<dbReference type="HOGENOM" id="CLU_027175_0_0_1"/>
<dbReference type="OMA" id="MYCLEER"/>
<dbReference type="Proteomes" id="UP000007015">
    <property type="component" value="Chromosome 8"/>
</dbReference>
<dbReference type="GO" id="GO:0005634">
    <property type="term" value="C:nucleus"/>
    <property type="evidence" value="ECO:0007669"/>
    <property type="project" value="EnsemblPlants"/>
</dbReference>
<dbReference type="GO" id="GO:0009736">
    <property type="term" value="P:cytokinin-activated signaling pathway"/>
    <property type="evidence" value="ECO:0007669"/>
    <property type="project" value="UniProtKB-KW"/>
</dbReference>
<dbReference type="GO" id="GO:0000160">
    <property type="term" value="P:phosphorelay signal transduction system"/>
    <property type="evidence" value="ECO:0007669"/>
    <property type="project" value="UniProtKB-KW"/>
</dbReference>
<dbReference type="FunFam" id="3.40.50.2300:FF:000451">
    <property type="entry name" value="Two-component response regulator ORR33"/>
    <property type="match status" value="1"/>
</dbReference>
<dbReference type="Gene3D" id="3.40.50.2300">
    <property type="match status" value="1"/>
</dbReference>
<dbReference type="InterPro" id="IPR045279">
    <property type="entry name" value="ARR-like"/>
</dbReference>
<dbReference type="InterPro" id="IPR011006">
    <property type="entry name" value="CheY-like_superfamily"/>
</dbReference>
<dbReference type="InterPro" id="IPR001789">
    <property type="entry name" value="Sig_transdc_resp-reg_receiver"/>
</dbReference>
<dbReference type="PANTHER" id="PTHR43874">
    <property type="entry name" value="TWO-COMPONENT RESPONSE REGULATOR"/>
    <property type="match status" value="1"/>
</dbReference>
<dbReference type="PANTHER" id="PTHR43874:SF123">
    <property type="entry name" value="TWO-COMPONENT RESPONSE REGULATOR ARR14"/>
    <property type="match status" value="1"/>
</dbReference>
<dbReference type="SUPFAM" id="SSF52172">
    <property type="entry name" value="CheY-like"/>
    <property type="match status" value="1"/>
</dbReference>
<dbReference type="PROSITE" id="PS50110">
    <property type="entry name" value="RESPONSE_REGULATORY"/>
    <property type="match status" value="1"/>
</dbReference>
<evidence type="ECO:0000250" key="1">
    <source>
        <dbReference type="UniProtKB" id="Q940D0"/>
    </source>
</evidence>
<evidence type="ECO:0000255" key="2">
    <source>
        <dbReference type="PROSITE-ProRule" id="PRU00169"/>
    </source>
</evidence>
<evidence type="ECO:0000256" key="3">
    <source>
        <dbReference type="SAM" id="MobiDB-lite"/>
    </source>
</evidence>
<evidence type="ECO:0000305" key="4"/>
<evidence type="ECO:0000312" key="5">
    <source>
        <dbReference type="EMBL" id="EAZ07232.1"/>
    </source>
</evidence>
<comment type="function">
    <text evidence="1">Functions as a response regulator involved in His-to-Asp phosphorelay signal transduction system. Phosphorylation of the Asp residue in the receiver domain activates the ability of the protein to promote the transcription of target genes. May directly activate some type-A response regulators in response to cytokinins.</text>
</comment>
<comment type="PTM">
    <text evidence="4">Two-component system major event consists of a His-to-Asp phosphorelay between a sensor histidine kinase (HK) and a response regulator (RR). In plants, the His-to-Asp phosphorelay involves an additional intermediate named Histidine-containing phosphotransfer protein (HPt). This multistep phosphorelay consists of a His-Asp-His-Asp sequential transfer of a phosphate group between first a His and an Asp of the HK protein, followed by the transfer to a conserved His of the HPt protein and finally the transfer to an Asp in the receiver domain of the RR protein.</text>
</comment>
<comment type="similarity">
    <text evidence="4">Belongs to the ARR family. Type-B subfamily.</text>
</comment>
<proteinExistence type="inferred from homology"/>
<protein>
    <recommendedName>
        <fullName evidence="4">Two-component response regulator ORR33</fullName>
    </recommendedName>
</protein>
<reference key="1">
    <citation type="journal article" date="2005" name="PLoS Biol.">
        <title>The genomes of Oryza sativa: a history of duplications.</title>
        <authorList>
            <person name="Yu J."/>
            <person name="Wang J."/>
            <person name="Lin W."/>
            <person name="Li S."/>
            <person name="Li H."/>
            <person name="Zhou J."/>
            <person name="Ni P."/>
            <person name="Dong W."/>
            <person name="Hu S."/>
            <person name="Zeng C."/>
            <person name="Zhang J."/>
            <person name="Zhang Y."/>
            <person name="Li R."/>
            <person name="Xu Z."/>
            <person name="Li S."/>
            <person name="Li X."/>
            <person name="Zheng H."/>
            <person name="Cong L."/>
            <person name="Lin L."/>
            <person name="Yin J."/>
            <person name="Geng J."/>
            <person name="Li G."/>
            <person name="Shi J."/>
            <person name="Liu J."/>
            <person name="Lv H."/>
            <person name="Li J."/>
            <person name="Wang J."/>
            <person name="Deng Y."/>
            <person name="Ran L."/>
            <person name="Shi X."/>
            <person name="Wang X."/>
            <person name="Wu Q."/>
            <person name="Li C."/>
            <person name="Ren X."/>
            <person name="Wang J."/>
            <person name="Wang X."/>
            <person name="Li D."/>
            <person name="Liu D."/>
            <person name="Zhang X."/>
            <person name="Ji Z."/>
            <person name="Zhao W."/>
            <person name="Sun Y."/>
            <person name="Zhang Z."/>
            <person name="Bao J."/>
            <person name="Han Y."/>
            <person name="Dong L."/>
            <person name="Ji J."/>
            <person name="Chen P."/>
            <person name="Wu S."/>
            <person name="Liu J."/>
            <person name="Xiao Y."/>
            <person name="Bu D."/>
            <person name="Tan J."/>
            <person name="Yang L."/>
            <person name="Ye C."/>
            <person name="Zhang J."/>
            <person name="Xu J."/>
            <person name="Zhou Y."/>
            <person name="Yu Y."/>
            <person name="Zhang B."/>
            <person name="Zhuang S."/>
            <person name="Wei H."/>
            <person name="Liu B."/>
            <person name="Lei M."/>
            <person name="Yu H."/>
            <person name="Li Y."/>
            <person name="Xu H."/>
            <person name="Wei S."/>
            <person name="He X."/>
            <person name="Fang L."/>
            <person name="Zhang Z."/>
            <person name="Zhang Y."/>
            <person name="Huang X."/>
            <person name="Su Z."/>
            <person name="Tong W."/>
            <person name="Li J."/>
            <person name="Tong Z."/>
            <person name="Li S."/>
            <person name="Ye J."/>
            <person name="Wang L."/>
            <person name="Fang L."/>
            <person name="Lei T."/>
            <person name="Chen C.-S."/>
            <person name="Chen H.-C."/>
            <person name="Xu Z."/>
            <person name="Li H."/>
            <person name="Huang H."/>
            <person name="Zhang F."/>
            <person name="Xu H."/>
            <person name="Li N."/>
            <person name="Zhao C."/>
            <person name="Li S."/>
            <person name="Dong L."/>
            <person name="Huang Y."/>
            <person name="Li L."/>
            <person name="Xi Y."/>
            <person name="Qi Q."/>
            <person name="Li W."/>
            <person name="Zhang B."/>
            <person name="Hu W."/>
            <person name="Zhang Y."/>
            <person name="Tian X."/>
            <person name="Jiao Y."/>
            <person name="Liang X."/>
            <person name="Jin J."/>
            <person name="Gao L."/>
            <person name="Zheng W."/>
            <person name="Hao B."/>
            <person name="Liu S.-M."/>
            <person name="Wang W."/>
            <person name="Yuan L."/>
            <person name="Cao M."/>
            <person name="McDermott J."/>
            <person name="Samudrala R."/>
            <person name="Wang J."/>
            <person name="Wong G.K.-S."/>
            <person name="Yang H."/>
        </authorList>
    </citation>
    <scope>NUCLEOTIDE SEQUENCE [LARGE SCALE GENOMIC DNA]</scope>
    <source>
        <strain>cv. 93-11</strain>
    </source>
</reference>
<accession>A2YVX1</accession>